<keyword id="KW-0002">3D-structure</keyword>
<keyword id="KW-0028">Amino-acid biosynthesis</keyword>
<keyword id="KW-0963">Cytoplasm</keyword>
<keyword id="KW-0368">Histidine biosynthesis</keyword>
<keyword id="KW-0378">Hydrolase</keyword>
<keyword id="KW-0460">Magnesium</keyword>
<keyword id="KW-0479">Metal-binding</keyword>
<keyword id="KW-1185">Reference proteome</keyword>
<keyword id="KW-0862">Zinc</keyword>
<dbReference type="EC" id="3.5.4.19" evidence="1"/>
<dbReference type="EMBL" id="AE000666">
    <property type="protein sequence ID" value="AAB84751.1"/>
    <property type="molecule type" value="Genomic_DNA"/>
</dbReference>
<dbReference type="PIR" id="F69130">
    <property type="entry name" value="F69130"/>
</dbReference>
<dbReference type="PDB" id="1ZPS">
    <property type="method" value="X-ray"/>
    <property type="resolution" value="1.70 A"/>
    <property type="chains" value="A/B=1-138"/>
</dbReference>
<dbReference type="PDBsum" id="1ZPS"/>
<dbReference type="SMR" id="O26347"/>
<dbReference type="FunCoup" id="O26347">
    <property type="interactions" value="73"/>
</dbReference>
<dbReference type="STRING" id="187420.MTH_245"/>
<dbReference type="PaxDb" id="187420-MTH_245"/>
<dbReference type="EnsemblBacteria" id="AAB84751">
    <property type="protein sequence ID" value="AAB84751"/>
    <property type="gene ID" value="MTH_245"/>
</dbReference>
<dbReference type="KEGG" id="mth:MTH_245"/>
<dbReference type="PATRIC" id="fig|187420.15.peg.214"/>
<dbReference type="HOGENOM" id="CLU_048577_5_1_2"/>
<dbReference type="InParanoid" id="O26347"/>
<dbReference type="UniPathway" id="UPA00031">
    <property type="reaction ID" value="UER00008"/>
</dbReference>
<dbReference type="EvolutionaryTrace" id="O26347"/>
<dbReference type="Proteomes" id="UP000005223">
    <property type="component" value="Chromosome"/>
</dbReference>
<dbReference type="GO" id="GO:0005737">
    <property type="term" value="C:cytoplasm"/>
    <property type="evidence" value="ECO:0007669"/>
    <property type="project" value="UniProtKB-SubCell"/>
</dbReference>
<dbReference type="GO" id="GO:0000287">
    <property type="term" value="F:magnesium ion binding"/>
    <property type="evidence" value="ECO:0007669"/>
    <property type="project" value="UniProtKB-UniRule"/>
</dbReference>
<dbReference type="GO" id="GO:0004635">
    <property type="term" value="F:phosphoribosyl-AMP cyclohydrolase activity"/>
    <property type="evidence" value="ECO:0007669"/>
    <property type="project" value="UniProtKB-UniRule"/>
</dbReference>
<dbReference type="GO" id="GO:0008270">
    <property type="term" value="F:zinc ion binding"/>
    <property type="evidence" value="ECO:0007669"/>
    <property type="project" value="UniProtKB-UniRule"/>
</dbReference>
<dbReference type="GO" id="GO:0000105">
    <property type="term" value="P:L-histidine biosynthetic process"/>
    <property type="evidence" value="ECO:0007669"/>
    <property type="project" value="UniProtKB-UniRule"/>
</dbReference>
<dbReference type="FunFam" id="3.10.20.810:FF:000001">
    <property type="entry name" value="Histidine biosynthesis bifunctional protein HisIE"/>
    <property type="match status" value="1"/>
</dbReference>
<dbReference type="Gene3D" id="4.10.80.70">
    <property type="match status" value="1"/>
</dbReference>
<dbReference type="Gene3D" id="3.10.20.810">
    <property type="entry name" value="Phosphoribosyl-AMP cyclohydrolase"/>
    <property type="match status" value="1"/>
</dbReference>
<dbReference type="HAMAP" id="MF_01021">
    <property type="entry name" value="HisI"/>
    <property type="match status" value="1"/>
</dbReference>
<dbReference type="InterPro" id="IPR026660">
    <property type="entry name" value="PRA-CH"/>
</dbReference>
<dbReference type="InterPro" id="IPR002496">
    <property type="entry name" value="PRib_AMP_CycHydrolase_dom"/>
</dbReference>
<dbReference type="InterPro" id="IPR038019">
    <property type="entry name" value="PRib_AMP_CycHydrolase_sf"/>
</dbReference>
<dbReference type="NCBIfam" id="NF000768">
    <property type="entry name" value="PRK00051.1"/>
    <property type="match status" value="1"/>
</dbReference>
<dbReference type="PANTHER" id="PTHR42945">
    <property type="entry name" value="HISTIDINE BIOSYNTHESIS BIFUNCTIONAL PROTEIN"/>
    <property type="match status" value="1"/>
</dbReference>
<dbReference type="PANTHER" id="PTHR42945:SF1">
    <property type="entry name" value="HISTIDINE BIOSYNTHESIS BIFUNCTIONAL PROTEIN HIS7"/>
    <property type="match status" value="1"/>
</dbReference>
<dbReference type="Pfam" id="PF01502">
    <property type="entry name" value="PRA-CH"/>
    <property type="match status" value="1"/>
</dbReference>
<dbReference type="SUPFAM" id="SSF141734">
    <property type="entry name" value="HisI-like"/>
    <property type="match status" value="1"/>
</dbReference>
<feature type="chain" id="PRO_0000136511" description="Phosphoribosyl-AMP cyclohydrolase">
    <location>
        <begin position="1"/>
        <end position="138"/>
    </location>
</feature>
<feature type="binding site" evidence="3">
    <location>
        <position position="85"/>
    </location>
    <ligand>
        <name>Mg(2+)</name>
        <dbReference type="ChEBI" id="CHEBI:18420"/>
    </ligand>
</feature>
<feature type="binding site" evidence="3">
    <location>
        <position position="86"/>
    </location>
    <ligand>
        <name>Zn(2+)</name>
        <dbReference type="ChEBI" id="CHEBI:29105"/>
        <note>ligand shared between dimeric partners</note>
    </ligand>
</feature>
<feature type="binding site" evidence="3">
    <location>
        <position position="87"/>
    </location>
    <ligand>
        <name>Mg(2+)</name>
        <dbReference type="ChEBI" id="CHEBI:18420"/>
    </ligand>
</feature>
<feature type="binding site" evidence="3">
    <location>
        <position position="89"/>
    </location>
    <ligand>
        <name>Mg(2+)</name>
        <dbReference type="ChEBI" id="CHEBI:18420"/>
    </ligand>
</feature>
<feature type="binding site" evidence="3">
    <location>
        <position position="102"/>
    </location>
    <ligand>
        <name>Zn(2+)</name>
        <dbReference type="ChEBI" id="CHEBI:29105"/>
        <note>ligand shared between dimeric partners</note>
    </ligand>
</feature>
<feature type="binding site" evidence="3">
    <location>
        <position position="109"/>
    </location>
    <ligand>
        <name>Zn(2+)</name>
        <dbReference type="ChEBI" id="CHEBI:29105"/>
        <note>ligand shared between dimeric partners</note>
    </ligand>
</feature>
<feature type="helix" evidence="5">
    <location>
        <begin position="5"/>
        <end position="7"/>
    </location>
</feature>
<feature type="helix" evidence="5">
    <location>
        <begin position="9"/>
        <end position="11"/>
    </location>
</feature>
<feature type="strand" evidence="5">
    <location>
        <begin position="18"/>
        <end position="20"/>
    </location>
</feature>
<feature type="strand" evidence="5">
    <location>
        <begin position="24"/>
        <end position="30"/>
    </location>
</feature>
<feature type="turn" evidence="5">
    <location>
        <begin position="31"/>
        <end position="33"/>
    </location>
</feature>
<feature type="strand" evidence="5">
    <location>
        <begin position="36"/>
        <end position="42"/>
    </location>
</feature>
<feature type="helix" evidence="5">
    <location>
        <begin position="44"/>
        <end position="53"/>
    </location>
</feature>
<feature type="strand" evidence="5">
    <location>
        <begin position="57"/>
        <end position="60"/>
    </location>
</feature>
<feature type="turn" evidence="5">
    <location>
        <begin position="61"/>
        <end position="64"/>
    </location>
</feature>
<feature type="strand" evidence="5">
    <location>
        <begin position="65"/>
        <end position="68"/>
    </location>
</feature>
<feature type="turn" evidence="5">
    <location>
        <begin position="69"/>
        <end position="73"/>
    </location>
</feature>
<feature type="strand" evidence="5">
    <location>
        <begin position="77"/>
        <end position="84"/>
    </location>
</feature>
<feature type="strand" evidence="5">
    <location>
        <begin position="88"/>
        <end position="99"/>
    </location>
</feature>
<feature type="strand" evidence="5">
    <location>
        <begin position="105"/>
        <end position="109"/>
    </location>
</feature>
<feature type="strand" evidence="5">
    <location>
        <begin position="112"/>
        <end position="115"/>
    </location>
</feature>
<feature type="strand" evidence="5">
    <location>
        <begin position="118"/>
        <end position="121"/>
    </location>
</feature>
<reference key="1">
    <citation type="journal article" date="1997" name="J. Bacteriol.">
        <title>Complete genome sequence of Methanobacterium thermoautotrophicum deltaH: functional analysis and comparative genomics.</title>
        <authorList>
            <person name="Smith D.R."/>
            <person name="Doucette-Stamm L.A."/>
            <person name="Deloughery C."/>
            <person name="Lee H.-M."/>
            <person name="Dubois J."/>
            <person name="Aldredge T."/>
            <person name="Bashirzadeh R."/>
            <person name="Blakely D."/>
            <person name="Cook R."/>
            <person name="Gilbert K."/>
            <person name="Harrison D."/>
            <person name="Hoang L."/>
            <person name="Keagle P."/>
            <person name="Lumm W."/>
            <person name="Pothier B."/>
            <person name="Qiu D."/>
            <person name="Spadafora R."/>
            <person name="Vicare R."/>
            <person name="Wang Y."/>
            <person name="Wierzbowski J."/>
            <person name="Gibson R."/>
            <person name="Jiwani N."/>
            <person name="Caruso A."/>
            <person name="Bush D."/>
            <person name="Safer H."/>
            <person name="Patwell D."/>
            <person name="Prabhakar S."/>
            <person name="McDougall S."/>
            <person name="Shimer G."/>
            <person name="Goyal A."/>
            <person name="Pietrovski S."/>
            <person name="Church G.M."/>
            <person name="Daniels C.J."/>
            <person name="Mao J.-I."/>
            <person name="Rice P."/>
            <person name="Noelling J."/>
            <person name="Reeve J.N."/>
        </authorList>
    </citation>
    <scope>NUCLEOTIDE SEQUENCE [LARGE SCALE GENOMIC DNA]</scope>
    <source>
        <strain>ATCC 29096 / DSM 1053 / JCM 10044 / NBRC 100330 / Delta H</strain>
    </source>
</reference>
<reference key="2">
    <citation type="journal article" date="2005" name="Biochemistry">
        <title>Crystal structure of Methanobacterium thermoautotrophicum phosphoribosyl-AMP cyclohydrolase HisI.</title>
        <authorList>
            <person name="Sivaraman J."/>
            <person name="Myers R.S."/>
            <person name="Boju L."/>
            <person name="Sulea T."/>
            <person name="Cygler M."/>
            <person name="Jo Davisson V."/>
            <person name="Schrag J.D."/>
        </authorList>
    </citation>
    <scope>X-RAY CRYSTALLOGRAPHY (1.70 ANGSTROMS) IN COMPLEX WITH CADMIUM</scope>
    <scope>FUNCTION</scope>
    <scope>CATALYTIC ACTIVITY</scope>
    <scope>COFACTOR</scope>
    <scope>BIOPHYSICOCHEMICAL PROPERTIES</scope>
    <scope>SUBUNIT</scope>
    <scope>METAL-BINDING SITES</scope>
</reference>
<accession>O26347</accession>
<organism>
    <name type="scientific">Methanothermobacter thermautotrophicus (strain ATCC 29096 / DSM 1053 / JCM 10044 / NBRC 100330 / Delta H)</name>
    <name type="common">Methanobacterium thermoautotrophicum</name>
    <dbReference type="NCBI Taxonomy" id="187420"/>
    <lineage>
        <taxon>Archaea</taxon>
        <taxon>Methanobacteriati</taxon>
        <taxon>Methanobacteriota</taxon>
        <taxon>Methanomada group</taxon>
        <taxon>Methanobacteria</taxon>
        <taxon>Methanobacteriales</taxon>
        <taxon>Methanobacteriaceae</taxon>
        <taxon>Methanothermobacter</taxon>
    </lineage>
</organism>
<protein>
    <recommendedName>
        <fullName evidence="1">Phosphoribosyl-AMP cyclohydrolase</fullName>
        <shortName evidence="1">PRA-CH</shortName>
        <ecNumber evidence="1">3.5.4.19</ecNumber>
    </recommendedName>
</protein>
<evidence type="ECO:0000255" key="1">
    <source>
        <dbReference type="HAMAP-Rule" id="MF_01021"/>
    </source>
</evidence>
<evidence type="ECO:0000269" key="2">
    <source>
    </source>
</evidence>
<evidence type="ECO:0000305" key="3"/>
<evidence type="ECO:0000305" key="4">
    <source>
    </source>
</evidence>
<evidence type="ECO:0007829" key="5">
    <source>
        <dbReference type="PDB" id="1ZPS"/>
    </source>
</evidence>
<proteinExistence type="evidence at protein level"/>
<sequence length="138" mass="15458">MIKSKGDVNILLNFRHNINGEDLIIAVAQDHETGEVLMVAYMNREALRRTLETGTAHYWSTSRGKLWLKGESSGHVQRVKDVLVDCDGDAVVLKVEQEGGACHTGYRSCFYRSIDGDELKVREDAVKVFDPEEIYGDG</sequence>
<name>HIS3_METTH</name>
<gene>
    <name evidence="1" type="primary">hisI</name>
    <name type="ordered locus">MTH_245</name>
</gene>
<comment type="function">
    <text evidence="1 2">Catalyzes the hydrolysis of the adenine ring of phosphoribosyl-AMP.</text>
</comment>
<comment type="catalytic activity">
    <reaction evidence="1 2">
        <text>1-(5-phospho-beta-D-ribosyl)-5'-AMP + H2O = 1-(5-phospho-beta-D-ribosyl)-5-[(5-phospho-beta-D-ribosylamino)methylideneamino]imidazole-4-carboxamide</text>
        <dbReference type="Rhea" id="RHEA:20049"/>
        <dbReference type="ChEBI" id="CHEBI:15377"/>
        <dbReference type="ChEBI" id="CHEBI:58435"/>
        <dbReference type="ChEBI" id="CHEBI:59457"/>
        <dbReference type="EC" id="3.5.4.19"/>
    </reaction>
</comment>
<comment type="cofactor">
    <cofactor evidence="4">
        <name>Mg(2+)</name>
        <dbReference type="ChEBI" id="CHEBI:18420"/>
    </cofactor>
    <text evidence="4">Binds 1 Mg(2+) ion per subunit.</text>
</comment>
<comment type="cofactor">
    <cofactor evidence="4">
        <name>Zn(2+)</name>
        <dbReference type="ChEBI" id="CHEBI:29105"/>
    </cofactor>
    <text evidence="4">Binds 1 zinc ion per subunit.</text>
</comment>
<comment type="biophysicochemical properties">
    <kinetics>
        <KM evidence="2">14 uM for phosphoribosyl-AMP</KM>
        <text>kcat is 8 sec(-1).</text>
    </kinetics>
</comment>
<comment type="pathway">
    <text evidence="1">Amino-acid biosynthesis; L-histidine biosynthesis; L-histidine from 5-phospho-alpha-D-ribose 1-diphosphate: step 3/9.</text>
</comment>
<comment type="subunit">
    <text evidence="1 2">Homodimer.</text>
</comment>
<comment type="subcellular location">
    <subcellularLocation>
        <location evidence="1">Cytoplasm</location>
    </subcellularLocation>
</comment>
<comment type="similarity">
    <text evidence="1">Belongs to the PRA-CH family.</text>
</comment>